<sequence>MAAKSDGAAAVAGPGPEGPAGADRGGAGGRGEVAAGIAGPGPVEAGCPGPRYELRDCCWVLCALLVFFSDGATDLWLAASYYLQGQSTYFGLTLLFVLLPSLVVQLLSFRWFVYDYSEPTGTPGPAVSTKDSDIVGAAISTKDSAVAFRTKEGSPELVPRPAPSSAGAYRRRCCRLCVWLLQTLVHLLQLGQVWRYLRALYLGLQSRWRGERLRRHFYWRMLFESADVSMLRLLETFLRSAPQLVLQLSLLVHRGREPELLTALSISASLVSLAWTLASYQKVLRDSRDDKRPLSYKGAVVQVLWHLFTIAARTLAFALFASVYRLYFGIFIVAHWCIMTFWVIQGETDFCMSKWEEIIYNMVVGIIYIFCWFNVKEGRSRRRVTLYYCIVLLENAALTGFWYSSRNFSTDFYSLILVCVVASSFALGIFFMCVYYCLLHPNGPMLGPQAPGCIFPEAPGPCGPPADAITSPPRSLPRTTGAERDGAAVGGERAGTPTPPVFQVRPGLPPTPVARPLRTEGPVIRIDLPRKKYPAWDAHFIDRRLRKTILALEYSSPATPRLQYRSMGTSQELLEYETTV</sequence>
<keyword id="KW-1003">Cell membrane</keyword>
<keyword id="KW-0472">Membrane</keyword>
<keyword id="KW-1185">Reference proteome</keyword>
<keyword id="KW-0812">Transmembrane</keyword>
<keyword id="KW-1133">Transmembrane helix</keyword>
<feature type="chain" id="PRO_0000190791" description="XK-related protein 7">
    <location>
        <begin position="1"/>
        <end position="580"/>
    </location>
</feature>
<feature type="transmembrane region" description="Helical" evidence="2">
    <location>
        <begin position="59"/>
        <end position="79"/>
    </location>
</feature>
<feature type="transmembrane region" description="Helical" evidence="2">
    <location>
        <begin position="89"/>
        <end position="109"/>
    </location>
</feature>
<feature type="transmembrane region" description="Helical" evidence="2">
    <location>
        <begin position="260"/>
        <end position="280"/>
    </location>
</feature>
<feature type="transmembrane region" description="Helical" evidence="2">
    <location>
        <begin position="303"/>
        <end position="323"/>
    </location>
</feature>
<feature type="transmembrane region" description="Helical" evidence="2">
    <location>
        <begin position="326"/>
        <end position="346"/>
    </location>
</feature>
<feature type="transmembrane region" description="Helical" evidence="2">
    <location>
        <begin position="355"/>
        <end position="375"/>
    </location>
</feature>
<feature type="transmembrane region" description="Helical" evidence="2">
    <location>
        <begin position="384"/>
        <end position="404"/>
    </location>
</feature>
<feature type="transmembrane region" description="Helical" evidence="2">
    <location>
        <begin position="415"/>
        <end position="435"/>
    </location>
</feature>
<feature type="region of interest" description="Disordered" evidence="3">
    <location>
        <begin position="1"/>
        <end position="28"/>
    </location>
</feature>
<feature type="region of interest" description="Disordered" evidence="3">
    <location>
        <begin position="470"/>
        <end position="516"/>
    </location>
</feature>
<feature type="compositionally biased region" description="Low complexity" evidence="3">
    <location>
        <begin position="1"/>
        <end position="22"/>
    </location>
</feature>
<protein>
    <recommendedName>
        <fullName evidence="5">XK-related protein 7</fullName>
    </recommendedName>
</protein>
<name>XKR7_RAT</name>
<dbReference type="EMBL" id="AY534261">
    <property type="protein sequence ID" value="AAT07110.1"/>
    <property type="molecule type" value="mRNA"/>
</dbReference>
<dbReference type="RefSeq" id="NP_001012092.1">
    <property type="nucleotide sequence ID" value="NM_001012092.1"/>
</dbReference>
<dbReference type="RefSeq" id="XP_008760556.1">
    <property type="nucleotide sequence ID" value="XM_008762334.2"/>
</dbReference>
<dbReference type="SMR" id="Q5GH56"/>
<dbReference type="FunCoup" id="Q5GH56">
    <property type="interactions" value="579"/>
</dbReference>
<dbReference type="STRING" id="10116.ENSRNOP00000012156"/>
<dbReference type="GlyGen" id="Q5GH56">
    <property type="glycosylation" value="2 sites"/>
</dbReference>
<dbReference type="iPTMnet" id="Q5GH56"/>
<dbReference type="PhosphoSitePlus" id="Q5GH56"/>
<dbReference type="jPOST" id="Q5GH56"/>
<dbReference type="PaxDb" id="10116-ENSRNOP00000012156"/>
<dbReference type="Ensembl" id="ENSRNOT00000012156.4">
    <property type="protein sequence ID" value="ENSRNOP00000012156.3"/>
    <property type="gene ID" value="ENSRNOG00000009180.5"/>
</dbReference>
<dbReference type="GeneID" id="311549"/>
<dbReference type="KEGG" id="rno:311549"/>
<dbReference type="UCSC" id="RGD:1359224">
    <property type="organism name" value="rat"/>
</dbReference>
<dbReference type="AGR" id="RGD:1359224"/>
<dbReference type="CTD" id="343702"/>
<dbReference type="RGD" id="1359224">
    <property type="gene designation" value="Xkr7"/>
</dbReference>
<dbReference type="eggNOG" id="KOG4790">
    <property type="taxonomic scope" value="Eukaryota"/>
</dbReference>
<dbReference type="GeneTree" id="ENSGT01110000267146"/>
<dbReference type="HOGENOM" id="CLU_028534_1_0_1"/>
<dbReference type="InParanoid" id="Q5GH56"/>
<dbReference type="OMA" id="AMVQILW"/>
<dbReference type="OrthoDB" id="6356248at2759"/>
<dbReference type="PhylomeDB" id="Q5GH56"/>
<dbReference type="TreeFam" id="TF316454"/>
<dbReference type="PRO" id="PR:Q5GH56"/>
<dbReference type="Proteomes" id="UP000002494">
    <property type="component" value="Chromosome 3"/>
</dbReference>
<dbReference type="Bgee" id="ENSRNOG00000009180">
    <property type="expression patterns" value="Expressed in cerebellum and 3 other cell types or tissues"/>
</dbReference>
<dbReference type="GO" id="GO:0005886">
    <property type="term" value="C:plasma membrane"/>
    <property type="evidence" value="ECO:0000250"/>
    <property type="project" value="UniProtKB"/>
</dbReference>
<dbReference type="GO" id="GO:1902742">
    <property type="term" value="P:apoptotic process involved in development"/>
    <property type="evidence" value="ECO:0000318"/>
    <property type="project" value="GO_Central"/>
</dbReference>
<dbReference type="GO" id="GO:0043652">
    <property type="term" value="P:engulfment of apoptotic cell"/>
    <property type="evidence" value="ECO:0000318"/>
    <property type="project" value="GO_Central"/>
</dbReference>
<dbReference type="GO" id="GO:0070782">
    <property type="term" value="P:phosphatidylserine exposure on apoptotic cell surface"/>
    <property type="evidence" value="ECO:0000318"/>
    <property type="project" value="GO_Central"/>
</dbReference>
<dbReference type="InterPro" id="IPR018629">
    <property type="entry name" value="XK-rel"/>
</dbReference>
<dbReference type="InterPro" id="IPR050895">
    <property type="entry name" value="XK-related_scramblase"/>
</dbReference>
<dbReference type="PANTHER" id="PTHR16024">
    <property type="entry name" value="XK-RELATED PROTEIN"/>
    <property type="match status" value="1"/>
</dbReference>
<dbReference type="PANTHER" id="PTHR16024:SF7">
    <property type="entry name" value="XK-RELATED PROTEIN 7"/>
    <property type="match status" value="1"/>
</dbReference>
<dbReference type="Pfam" id="PF09815">
    <property type="entry name" value="XK-related"/>
    <property type="match status" value="1"/>
</dbReference>
<evidence type="ECO:0000250" key="1">
    <source>
        <dbReference type="UniProtKB" id="Q5GH64"/>
    </source>
</evidence>
<evidence type="ECO:0000255" key="2"/>
<evidence type="ECO:0000256" key="3">
    <source>
        <dbReference type="SAM" id="MobiDB-lite"/>
    </source>
</evidence>
<evidence type="ECO:0000303" key="4">
    <source ref="1"/>
</evidence>
<evidence type="ECO:0000305" key="5"/>
<evidence type="ECO:0000312" key="6">
    <source>
        <dbReference type="RGD" id="1359224"/>
    </source>
</evidence>
<reference key="1">
    <citation type="submission" date="2004-01" db="EMBL/GenBank/DDBJ databases">
        <title>A superfamily of XK-related genes (XRG) widely expressed in vertebrates and invertebrates.</title>
        <authorList>
            <person name="Huang C.-H."/>
            <person name="Chen Y."/>
        </authorList>
    </citation>
    <scope>NUCLEOTIDE SEQUENCE [MRNA]</scope>
    <source>
        <strain>Sprague-Dawley</strain>
    </source>
</reference>
<accession>Q5GH56</accession>
<organism>
    <name type="scientific">Rattus norvegicus</name>
    <name type="common">Rat</name>
    <dbReference type="NCBI Taxonomy" id="10116"/>
    <lineage>
        <taxon>Eukaryota</taxon>
        <taxon>Metazoa</taxon>
        <taxon>Chordata</taxon>
        <taxon>Craniata</taxon>
        <taxon>Vertebrata</taxon>
        <taxon>Euteleostomi</taxon>
        <taxon>Mammalia</taxon>
        <taxon>Eutheria</taxon>
        <taxon>Euarchontoglires</taxon>
        <taxon>Glires</taxon>
        <taxon>Rodentia</taxon>
        <taxon>Myomorpha</taxon>
        <taxon>Muroidea</taxon>
        <taxon>Muridae</taxon>
        <taxon>Murinae</taxon>
        <taxon>Rattus</taxon>
    </lineage>
</organism>
<gene>
    <name evidence="6" type="primary">Xkr7</name>
    <name evidence="4" type="synonym">Xrg7</name>
</gene>
<proteinExistence type="evidence at transcript level"/>
<comment type="subcellular location">
    <subcellularLocation>
        <location evidence="1">Cell membrane</location>
        <topology evidence="2">Multi-pass membrane protein</topology>
    </subcellularLocation>
</comment>
<comment type="similarity">
    <text evidence="5">Belongs to the XK family.</text>
</comment>